<feature type="chain" id="PRO_1000051588" description="Glucose-1-phosphate adenylyltransferase">
    <location>
        <begin position="1"/>
        <end position="380"/>
    </location>
</feature>
<feature type="binding site" evidence="1">
    <location>
        <position position="164"/>
    </location>
    <ligand>
        <name>alpha-D-glucose 1-phosphate</name>
        <dbReference type="ChEBI" id="CHEBI:58601"/>
    </ligand>
</feature>
<feature type="binding site" evidence="1">
    <location>
        <begin position="179"/>
        <end position="180"/>
    </location>
    <ligand>
        <name>alpha-D-glucose 1-phosphate</name>
        <dbReference type="ChEBI" id="CHEBI:58601"/>
    </ligand>
</feature>
<feature type="binding site" evidence="1">
    <location>
        <position position="190"/>
    </location>
    <ligand>
        <name>alpha-D-glucose 1-phosphate</name>
        <dbReference type="ChEBI" id="CHEBI:58601"/>
    </ligand>
</feature>
<evidence type="ECO:0000255" key="1">
    <source>
        <dbReference type="HAMAP-Rule" id="MF_00624"/>
    </source>
</evidence>
<reference key="1">
    <citation type="journal article" date="2007" name="J. Bacteriol.">
        <title>Genome sequence of Avery's virulent serotype 2 strain D39 of Streptococcus pneumoniae and comparison with that of unencapsulated laboratory strain R6.</title>
        <authorList>
            <person name="Lanie J.A."/>
            <person name="Ng W.-L."/>
            <person name="Kazmierczak K.M."/>
            <person name="Andrzejewski T.M."/>
            <person name="Davidsen T.M."/>
            <person name="Wayne K.J."/>
            <person name="Tettelin H."/>
            <person name="Glass J.I."/>
            <person name="Winkler M.E."/>
        </authorList>
    </citation>
    <scope>NUCLEOTIDE SEQUENCE [LARGE SCALE GENOMIC DNA]</scope>
    <source>
        <strain>D39 / NCTC 7466</strain>
    </source>
</reference>
<gene>
    <name evidence="1" type="primary">glgC</name>
    <name type="ordered locus">SPD_1006</name>
</gene>
<keyword id="KW-0067">ATP-binding</keyword>
<keyword id="KW-0119">Carbohydrate metabolism</keyword>
<keyword id="KW-0320">Glycogen biosynthesis</keyword>
<keyword id="KW-0321">Glycogen metabolism</keyword>
<keyword id="KW-0547">Nucleotide-binding</keyword>
<keyword id="KW-0548">Nucleotidyltransferase</keyword>
<keyword id="KW-1185">Reference proteome</keyword>
<keyword id="KW-0808">Transferase</keyword>
<sequence>MKNEMLALILAGGQGTRLGKLTQSIAKPAVQFGGRYRIIDFALSNCANSGIHNVGVVTQYQPLALNNHIGNGSSWGLDGINSGVSILQPYSASEGNRWFEGTSHAIYQNIDYIDNVNPEYVLILSGDHIYKMDYDDMLQSHKDNNASLTVAVLDVPLKEASRFGIMNTDANNRIVEFEEKPAQPKSTKASMGIYIFDWQRLRNMLVAAEKSKVGMSDFGKNVIPNYLESGESVYAYEFSGYWKDVGTIESLWEANMEYISPENALDSRNRQWKIYSRNLISPPNFLGANAHVEDSLVVDGCFVDGTVKHSILSRGAQVREGAEVLDSVIMSGAIIGQGAKIKRAIIGEGAIISDGVEIDGTDEVQVVGYNEVVGVATDED</sequence>
<organism>
    <name type="scientific">Streptococcus pneumoniae serotype 2 (strain D39 / NCTC 7466)</name>
    <dbReference type="NCBI Taxonomy" id="373153"/>
    <lineage>
        <taxon>Bacteria</taxon>
        <taxon>Bacillati</taxon>
        <taxon>Bacillota</taxon>
        <taxon>Bacilli</taxon>
        <taxon>Lactobacillales</taxon>
        <taxon>Streptococcaceae</taxon>
        <taxon>Streptococcus</taxon>
    </lineage>
</organism>
<proteinExistence type="inferred from homology"/>
<accession>Q04KG7</accession>
<protein>
    <recommendedName>
        <fullName evidence="1">Glucose-1-phosphate adenylyltransferase</fullName>
        <ecNumber evidence="1">2.7.7.27</ecNumber>
    </recommendedName>
    <alternativeName>
        <fullName evidence="1">ADP-glucose pyrophosphorylase</fullName>
        <shortName evidence="1">ADPGlc PPase</shortName>
    </alternativeName>
    <alternativeName>
        <fullName evidence="1">ADP-glucose synthase</fullName>
    </alternativeName>
</protein>
<name>GLGC_STRP2</name>
<dbReference type="EC" id="2.7.7.27" evidence="1"/>
<dbReference type="EMBL" id="CP000410">
    <property type="protein sequence ID" value="ABJ54622.1"/>
    <property type="molecule type" value="Genomic_DNA"/>
</dbReference>
<dbReference type="RefSeq" id="WP_000787267.1">
    <property type="nucleotide sequence ID" value="NZ_JAMLJR010000014.1"/>
</dbReference>
<dbReference type="SMR" id="Q04KG7"/>
<dbReference type="PaxDb" id="373153-SPD_1006"/>
<dbReference type="KEGG" id="spd:SPD_1006"/>
<dbReference type="eggNOG" id="COG0448">
    <property type="taxonomic scope" value="Bacteria"/>
</dbReference>
<dbReference type="HOGENOM" id="CLU_029499_14_0_9"/>
<dbReference type="BioCyc" id="SPNE373153:G1G6V-1094-MONOMER"/>
<dbReference type="UniPathway" id="UPA00164"/>
<dbReference type="Proteomes" id="UP000001452">
    <property type="component" value="Chromosome"/>
</dbReference>
<dbReference type="GO" id="GO:0005524">
    <property type="term" value="F:ATP binding"/>
    <property type="evidence" value="ECO:0007669"/>
    <property type="project" value="UniProtKB-KW"/>
</dbReference>
<dbReference type="GO" id="GO:0008878">
    <property type="term" value="F:glucose-1-phosphate adenylyltransferase activity"/>
    <property type="evidence" value="ECO:0007669"/>
    <property type="project" value="UniProtKB-UniRule"/>
</dbReference>
<dbReference type="GO" id="GO:0005978">
    <property type="term" value="P:glycogen biosynthetic process"/>
    <property type="evidence" value="ECO:0007669"/>
    <property type="project" value="UniProtKB-UniRule"/>
</dbReference>
<dbReference type="CDD" id="cd02508">
    <property type="entry name" value="ADP_Glucose_PP"/>
    <property type="match status" value="1"/>
</dbReference>
<dbReference type="CDD" id="cd04651">
    <property type="entry name" value="LbH_G1P_AT_C"/>
    <property type="match status" value="1"/>
</dbReference>
<dbReference type="Gene3D" id="2.160.10.10">
    <property type="entry name" value="Hexapeptide repeat proteins"/>
    <property type="match status" value="1"/>
</dbReference>
<dbReference type="Gene3D" id="3.90.550.10">
    <property type="entry name" value="Spore Coat Polysaccharide Biosynthesis Protein SpsA, Chain A"/>
    <property type="match status" value="1"/>
</dbReference>
<dbReference type="HAMAP" id="MF_00624">
    <property type="entry name" value="GlgC"/>
    <property type="match status" value="1"/>
</dbReference>
<dbReference type="InterPro" id="IPR011831">
    <property type="entry name" value="ADP-Glc_PPase"/>
</dbReference>
<dbReference type="InterPro" id="IPR005836">
    <property type="entry name" value="ADP_Glu_pyroP_CS"/>
</dbReference>
<dbReference type="InterPro" id="IPR023049">
    <property type="entry name" value="GlgC_bac"/>
</dbReference>
<dbReference type="InterPro" id="IPR056818">
    <property type="entry name" value="GlmU/GlgC-like_hexapep"/>
</dbReference>
<dbReference type="InterPro" id="IPR005835">
    <property type="entry name" value="NTP_transferase_dom"/>
</dbReference>
<dbReference type="InterPro" id="IPR029044">
    <property type="entry name" value="Nucleotide-diphossugar_trans"/>
</dbReference>
<dbReference type="InterPro" id="IPR011004">
    <property type="entry name" value="Trimer_LpxA-like_sf"/>
</dbReference>
<dbReference type="NCBIfam" id="TIGR02091">
    <property type="entry name" value="glgC"/>
    <property type="match status" value="1"/>
</dbReference>
<dbReference type="NCBIfam" id="NF003670">
    <property type="entry name" value="PRK05293.1"/>
    <property type="match status" value="1"/>
</dbReference>
<dbReference type="PANTHER" id="PTHR43523:SF2">
    <property type="entry name" value="GLUCOSE-1-PHOSPHATE ADENYLYLTRANSFERASE"/>
    <property type="match status" value="1"/>
</dbReference>
<dbReference type="PANTHER" id="PTHR43523">
    <property type="entry name" value="GLUCOSE-1-PHOSPHATE ADENYLYLTRANSFERASE-RELATED"/>
    <property type="match status" value="1"/>
</dbReference>
<dbReference type="Pfam" id="PF24894">
    <property type="entry name" value="Hexapep_GlmU"/>
    <property type="match status" value="1"/>
</dbReference>
<dbReference type="Pfam" id="PF00483">
    <property type="entry name" value="NTP_transferase"/>
    <property type="match status" value="1"/>
</dbReference>
<dbReference type="SUPFAM" id="SSF53448">
    <property type="entry name" value="Nucleotide-diphospho-sugar transferases"/>
    <property type="match status" value="1"/>
</dbReference>
<dbReference type="SUPFAM" id="SSF51161">
    <property type="entry name" value="Trimeric LpxA-like enzymes"/>
    <property type="match status" value="1"/>
</dbReference>
<dbReference type="PROSITE" id="PS00808">
    <property type="entry name" value="ADP_GLC_PYROPHOSPH_1"/>
    <property type="match status" value="1"/>
</dbReference>
<dbReference type="PROSITE" id="PS00809">
    <property type="entry name" value="ADP_GLC_PYROPHOSPH_2"/>
    <property type="match status" value="1"/>
</dbReference>
<dbReference type="PROSITE" id="PS00810">
    <property type="entry name" value="ADP_GLC_PYROPHOSPH_3"/>
    <property type="match status" value="1"/>
</dbReference>
<comment type="function">
    <text evidence="1">Involved in the biosynthesis of ADP-glucose, a building block required for the elongation reactions to produce glycogen. Catalyzes the reaction between ATP and alpha-D-glucose 1-phosphate (G1P) to produce pyrophosphate and ADP-Glc.</text>
</comment>
<comment type="catalytic activity">
    <reaction evidence="1">
        <text>alpha-D-glucose 1-phosphate + ATP + H(+) = ADP-alpha-D-glucose + diphosphate</text>
        <dbReference type="Rhea" id="RHEA:12120"/>
        <dbReference type="ChEBI" id="CHEBI:15378"/>
        <dbReference type="ChEBI" id="CHEBI:30616"/>
        <dbReference type="ChEBI" id="CHEBI:33019"/>
        <dbReference type="ChEBI" id="CHEBI:57498"/>
        <dbReference type="ChEBI" id="CHEBI:58601"/>
        <dbReference type="EC" id="2.7.7.27"/>
    </reaction>
</comment>
<comment type="pathway">
    <text evidence="1">Glycan biosynthesis; glycogen biosynthesis.</text>
</comment>
<comment type="subunit">
    <text evidence="1">Homotetramer.</text>
</comment>
<comment type="similarity">
    <text evidence="1">Belongs to the bacterial/plant glucose-1-phosphate adenylyltransferase family.</text>
</comment>